<keyword id="KW-0032">Aminotransferase</keyword>
<keyword id="KW-0663">Pyridoxal phosphate</keyword>
<keyword id="KW-1185">Reference proteome</keyword>
<keyword id="KW-0808">Transferase</keyword>
<accession>P40829</accession>
<organism>
    <name type="scientific">Mycobacterium leprae (strain TN)</name>
    <dbReference type="NCBI Taxonomy" id="272631"/>
    <lineage>
        <taxon>Bacteria</taxon>
        <taxon>Bacillati</taxon>
        <taxon>Actinomycetota</taxon>
        <taxon>Actinomycetes</taxon>
        <taxon>Mycobacteriales</taxon>
        <taxon>Mycobacteriaceae</taxon>
        <taxon>Mycobacterium</taxon>
    </lineage>
</organism>
<name>GABT_MYCLE</name>
<feature type="chain" id="PRO_0000120385" description="4-aminobutyrate aminotransferase">
    <location>
        <begin position="1"/>
        <end position="446"/>
    </location>
</feature>
<feature type="modified residue" description="N6-(pyridoxal phosphate)lysine" evidence="1">
    <location>
        <position position="291"/>
    </location>
</feature>
<dbReference type="EC" id="2.6.1.19"/>
<dbReference type="EC" id="2.6.1.22"/>
<dbReference type="EMBL" id="U00011">
    <property type="protein sequence ID" value="AAA17107.1"/>
    <property type="molecule type" value="Genomic_DNA"/>
</dbReference>
<dbReference type="EMBL" id="AL023591">
    <property type="protein sequence ID" value="CAA19078.1"/>
    <property type="molecule type" value="Genomic_DNA"/>
</dbReference>
<dbReference type="EMBL" id="AL583918">
    <property type="protein sequence ID" value="CAC29993.1"/>
    <property type="molecule type" value="Genomic_DNA"/>
</dbReference>
<dbReference type="PIR" id="S72743">
    <property type="entry name" value="S72743"/>
</dbReference>
<dbReference type="RefSeq" id="NP_301425.1">
    <property type="nucleotide sequence ID" value="NC_002677.1"/>
</dbReference>
<dbReference type="RefSeq" id="WP_010907749.1">
    <property type="nucleotide sequence ID" value="NC_002677.1"/>
</dbReference>
<dbReference type="SMR" id="P40829"/>
<dbReference type="STRING" id="272631.gene:17574306"/>
<dbReference type="KEGG" id="mle:ML0485"/>
<dbReference type="PATRIC" id="fig|272631.5.peg.849"/>
<dbReference type="Leproma" id="ML0485"/>
<dbReference type="eggNOG" id="COG0160">
    <property type="taxonomic scope" value="Bacteria"/>
</dbReference>
<dbReference type="HOGENOM" id="CLU_016922_10_0_11"/>
<dbReference type="OrthoDB" id="9801052at2"/>
<dbReference type="UniPathway" id="UPA00733"/>
<dbReference type="Proteomes" id="UP000000806">
    <property type="component" value="Chromosome"/>
</dbReference>
<dbReference type="GO" id="GO:0047298">
    <property type="term" value="F:(S)-3-amino-2-methylpropionate transaminase activity"/>
    <property type="evidence" value="ECO:0007669"/>
    <property type="project" value="UniProtKB-EC"/>
</dbReference>
<dbReference type="GO" id="GO:0034386">
    <property type="term" value="F:4-aminobutyrate:2-oxoglutarate transaminase activity"/>
    <property type="evidence" value="ECO:0007669"/>
    <property type="project" value="UniProtKB-EC"/>
</dbReference>
<dbReference type="GO" id="GO:0042802">
    <property type="term" value="F:identical protein binding"/>
    <property type="evidence" value="ECO:0007669"/>
    <property type="project" value="TreeGrafter"/>
</dbReference>
<dbReference type="GO" id="GO:0030170">
    <property type="term" value="F:pyridoxal phosphate binding"/>
    <property type="evidence" value="ECO:0007669"/>
    <property type="project" value="InterPro"/>
</dbReference>
<dbReference type="GO" id="GO:0009450">
    <property type="term" value="P:gamma-aminobutyric acid catabolic process"/>
    <property type="evidence" value="ECO:0007669"/>
    <property type="project" value="UniProtKB-UniPathway"/>
</dbReference>
<dbReference type="CDD" id="cd00610">
    <property type="entry name" value="OAT_like"/>
    <property type="match status" value="1"/>
</dbReference>
<dbReference type="FunFam" id="3.40.640.10:FF:000013">
    <property type="entry name" value="4-aminobutyrate aminotransferase"/>
    <property type="match status" value="1"/>
</dbReference>
<dbReference type="FunFam" id="3.90.1150.10:FF:000022">
    <property type="entry name" value="4-aminobutyrate aminotransferase"/>
    <property type="match status" value="1"/>
</dbReference>
<dbReference type="Gene3D" id="3.90.1150.10">
    <property type="entry name" value="Aspartate Aminotransferase, domain 1"/>
    <property type="match status" value="1"/>
</dbReference>
<dbReference type="Gene3D" id="3.40.640.10">
    <property type="entry name" value="Type I PLP-dependent aspartate aminotransferase-like (Major domain)"/>
    <property type="match status" value="1"/>
</dbReference>
<dbReference type="InterPro" id="IPR004632">
    <property type="entry name" value="4NH2But_aminotransferase_bac"/>
</dbReference>
<dbReference type="InterPro" id="IPR005814">
    <property type="entry name" value="Aminotrans_3"/>
</dbReference>
<dbReference type="InterPro" id="IPR049704">
    <property type="entry name" value="Aminotrans_3_PPA_site"/>
</dbReference>
<dbReference type="InterPro" id="IPR050103">
    <property type="entry name" value="Class-III_PLP-dep_AT"/>
</dbReference>
<dbReference type="InterPro" id="IPR015424">
    <property type="entry name" value="PyrdxlP-dep_Trfase"/>
</dbReference>
<dbReference type="InterPro" id="IPR015421">
    <property type="entry name" value="PyrdxlP-dep_Trfase_major"/>
</dbReference>
<dbReference type="InterPro" id="IPR015422">
    <property type="entry name" value="PyrdxlP-dep_Trfase_small"/>
</dbReference>
<dbReference type="NCBIfam" id="TIGR00700">
    <property type="entry name" value="GABAtrnsam"/>
    <property type="match status" value="1"/>
</dbReference>
<dbReference type="NCBIfam" id="NF004714">
    <property type="entry name" value="PRK06058.1"/>
    <property type="match status" value="1"/>
</dbReference>
<dbReference type="PANTHER" id="PTHR11986">
    <property type="entry name" value="AMINOTRANSFERASE CLASS III"/>
    <property type="match status" value="1"/>
</dbReference>
<dbReference type="Pfam" id="PF00202">
    <property type="entry name" value="Aminotran_3"/>
    <property type="match status" value="1"/>
</dbReference>
<dbReference type="PIRSF" id="PIRSF000521">
    <property type="entry name" value="Transaminase_4ab_Lys_Orn"/>
    <property type="match status" value="1"/>
</dbReference>
<dbReference type="SUPFAM" id="SSF53383">
    <property type="entry name" value="PLP-dependent transferases"/>
    <property type="match status" value="1"/>
</dbReference>
<dbReference type="PROSITE" id="PS00600">
    <property type="entry name" value="AA_TRANSFER_CLASS_3"/>
    <property type="match status" value="1"/>
</dbReference>
<sequence length="446" mass="47215">MTSVEQSRQLVTEIPGPVSLELAKRLNAAVPRGVGVTLPVFVTRAAGGVIEDVDGNRLIDLGSGIAVTTIGNSSPRVVDAVRAQVADFTHTCFIITPYEEYVAVTEQLNRITPGSGEKRSVLFNSGAEAVENSIKVARSYTRKPAVVAFDHAYHGRTNLTMALTAKSMPYKSGFGPFAPEIYRAPLSYPYRDGLLNKDLATDGKLAGARAINVIEKQVGADDLAAVIIEPIQGEGGFIVPAEGFLATLLDWCRKNNVMFIADEVQTGFARTGAMFACEHDGIVPDLICTAKGIADGLPLAAVTGRAEIMNAPHVSGLGGTFGGNPVACAAALATITTIENDGLIQRAQQIERLITDRLLRLQDADDRIGDVRGRGAMIAVELVKSGTAEPDPELTEKVATAAHATGVIILTCGMFGNIIRLLPPLTISDELLAEGLDILSRILGDF</sequence>
<gene>
    <name type="primary">gabT</name>
    <name type="ordered locus">ML0485</name>
    <name type="ORF">B1177_F2_67</name>
    <name type="ORF">MLCB1259.03c</name>
</gene>
<evidence type="ECO:0000250" key="1"/>
<evidence type="ECO:0000305" key="2"/>
<comment type="catalytic activity">
    <reaction>
        <text>4-aminobutanoate + 2-oxoglutarate = succinate semialdehyde + L-glutamate</text>
        <dbReference type="Rhea" id="RHEA:23352"/>
        <dbReference type="ChEBI" id="CHEBI:16810"/>
        <dbReference type="ChEBI" id="CHEBI:29985"/>
        <dbReference type="ChEBI" id="CHEBI:57706"/>
        <dbReference type="ChEBI" id="CHEBI:59888"/>
        <dbReference type="EC" id="2.6.1.19"/>
    </reaction>
</comment>
<comment type="catalytic activity">
    <reaction>
        <text>(S)-3-amino-2-methylpropanoate + 2-oxoglutarate = 2-methyl-3-oxopropanoate + L-glutamate</text>
        <dbReference type="Rhea" id="RHEA:13993"/>
        <dbReference type="ChEBI" id="CHEBI:16810"/>
        <dbReference type="ChEBI" id="CHEBI:29985"/>
        <dbReference type="ChEBI" id="CHEBI:57700"/>
        <dbReference type="ChEBI" id="CHEBI:58655"/>
        <dbReference type="EC" id="2.6.1.22"/>
    </reaction>
</comment>
<comment type="cofactor">
    <cofactor>
        <name>pyridoxal 5'-phosphate</name>
        <dbReference type="ChEBI" id="CHEBI:597326"/>
    </cofactor>
</comment>
<comment type="pathway">
    <text>Amino-acid degradation; 4-aminobutanoate degradation.</text>
</comment>
<comment type="similarity">
    <text evidence="2">Belongs to the class-III pyridoxal-phosphate-dependent aminotransferase family.</text>
</comment>
<proteinExistence type="inferred from homology"/>
<protein>
    <recommendedName>
        <fullName>4-aminobutyrate aminotransferase</fullName>
        <ecNumber>2.6.1.19</ecNumber>
    </recommendedName>
    <alternativeName>
        <fullName>(S)-3-amino-2-methylpropionate transaminase</fullName>
        <ecNumber>2.6.1.22</ecNumber>
    </alternativeName>
    <alternativeName>
        <fullName>GABA aminotransferase</fullName>
        <shortName>GABA-AT</shortName>
    </alternativeName>
    <alternativeName>
        <fullName>Gamma-amino-N-butyrate transaminase</fullName>
        <shortName>GABA transaminase</shortName>
    </alternativeName>
    <alternativeName>
        <fullName>Glutamate:succinic semialdehyde transaminase</fullName>
    </alternativeName>
    <alternativeName>
        <fullName>L-AIBAT</fullName>
    </alternativeName>
</protein>
<reference key="1">
    <citation type="submission" date="1994-03" db="EMBL/GenBank/DDBJ databases">
        <authorList>
            <person name="Smith D.R."/>
            <person name="Robison K."/>
        </authorList>
    </citation>
    <scope>NUCLEOTIDE SEQUENCE [GENOMIC DNA]</scope>
</reference>
<reference key="2">
    <citation type="journal article" date="2001" name="Nature">
        <title>Massive gene decay in the leprosy bacillus.</title>
        <authorList>
            <person name="Cole S.T."/>
            <person name="Eiglmeier K."/>
            <person name="Parkhill J."/>
            <person name="James K.D."/>
            <person name="Thomson N.R."/>
            <person name="Wheeler P.R."/>
            <person name="Honore N."/>
            <person name="Garnier T."/>
            <person name="Churcher C.M."/>
            <person name="Harris D.E."/>
            <person name="Mungall K.L."/>
            <person name="Basham D."/>
            <person name="Brown D."/>
            <person name="Chillingworth T."/>
            <person name="Connor R."/>
            <person name="Davies R.M."/>
            <person name="Devlin K."/>
            <person name="Duthoy S."/>
            <person name="Feltwell T."/>
            <person name="Fraser A."/>
            <person name="Hamlin N."/>
            <person name="Holroyd S."/>
            <person name="Hornsby T."/>
            <person name="Jagels K."/>
            <person name="Lacroix C."/>
            <person name="Maclean J."/>
            <person name="Moule S."/>
            <person name="Murphy L.D."/>
            <person name="Oliver K."/>
            <person name="Quail M.A."/>
            <person name="Rajandream M.A."/>
            <person name="Rutherford K.M."/>
            <person name="Rutter S."/>
            <person name="Seeger K."/>
            <person name="Simon S."/>
            <person name="Simmonds M."/>
            <person name="Skelton J."/>
            <person name="Squares R."/>
            <person name="Squares S."/>
            <person name="Stevens K."/>
            <person name="Taylor K."/>
            <person name="Whitehead S."/>
            <person name="Woodward J.R."/>
            <person name="Barrell B.G."/>
        </authorList>
    </citation>
    <scope>NUCLEOTIDE SEQUENCE [LARGE SCALE GENOMIC DNA]</scope>
    <source>
        <strain>TN</strain>
    </source>
</reference>